<keyword id="KW-0687">Ribonucleoprotein</keyword>
<keyword id="KW-0689">Ribosomal protein</keyword>
<keyword id="KW-0694">RNA-binding</keyword>
<keyword id="KW-0699">rRNA-binding</keyword>
<sequence>MIQMQSILEVADNSGAKKVMCIKVLGGSHHMMAKLGDVIVVSIKEAIPGGKVKKGDVYKGVIVRTKTGVVRSDGSTIKFDKNALVLLNKQDEPIGTRVFGPVTRELRAKKYVRIMSLAEEVL</sequence>
<dbReference type="EMBL" id="AE017197">
    <property type="protein sequence ID" value="AAU04104.1"/>
    <property type="molecule type" value="Genomic_DNA"/>
</dbReference>
<dbReference type="RefSeq" id="WP_004596218.1">
    <property type="nucleotide sequence ID" value="NC_006142.1"/>
</dbReference>
<dbReference type="SMR" id="Q68W88"/>
<dbReference type="GeneID" id="57569774"/>
<dbReference type="KEGG" id="rty:RT0641"/>
<dbReference type="eggNOG" id="COG0093">
    <property type="taxonomic scope" value="Bacteria"/>
</dbReference>
<dbReference type="HOGENOM" id="CLU_095071_2_1_5"/>
<dbReference type="OrthoDB" id="9806379at2"/>
<dbReference type="Proteomes" id="UP000000604">
    <property type="component" value="Chromosome"/>
</dbReference>
<dbReference type="GO" id="GO:0022625">
    <property type="term" value="C:cytosolic large ribosomal subunit"/>
    <property type="evidence" value="ECO:0007669"/>
    <property type="project" value="TreeGrafter"/>
</dbReference>
<dbReference type="GO" id="GO:0070180">
    <property type="term" value="F:large ribosomal subunit rRNA binding"/>
    <property type="evidence" value="ECO:0007669"/>
    <property type="project" value="TreeGrafter"/>
</dbReference>
<dbReference type="GO" id="GO:0003735">
    <property type="term" value="F:structural constituent of ribosome"/>
    <property type="evidence" value="ECO:0007669"/>
    <property type="project" value="InterPro"/>
</dbReference>
<dbReference type="GO" id="GO:0006412">
    <property type="term" value="P:translation"/>
    <property type="evidence" value="ECO:0007669"/>
    <property type="project" value="UniProtKB-UniRule"/>
</dbReference>
<dbReference type="CDD" id="cd00337">
    <property type="entry name" value="Ribosomal_uL14"/>
    <property type="match status" value="1"/>
</dbReference>
<dbReference type="FunFam" id="2.40.150.20:FF:000001">
    <property type="entry name" value="50S ribosomal protein L14"/>
    <property type="match status" value="1"/>
</dbReference>
<dbReference type="Gene3D" id="2.40.150.20">
    <property type="entry name" value="Ribosomal protein L14"/>
    <property type="match status" value="1"/>
</dbReference>
<dbReference type="HAMAP" id="MF_01367">
    <property type="entry name" value="Ribosomal_uL14"/>
    <property type="match status" value="1"/>
</dbReference>
<dbReference type="InterPro" id="IPR000218">
    <property type="entry name" value="Ribosomal_uL14"/>
</dbReference>
<dbReference type="InterPro" id="IPR005745">
    <property type="entry name" value="Ribosomal_uL14_bac-type"/>
</dbReference>
<dbReference type="InterPro" id="IPR019972">
    <property type="entry name" value="Ribosomal_uL14_CS"/>
</dbReference>
<dbReference type="InterPro" id="IPR036853">
    <property type="entry name" value="Ribosomal_uL14_sf"/>
</dbReference>
<dbReference type="NCBIfam" id="TIGR01067">
    <property type="entry name" value="rplN_bact"/>
    <property type="match status" value="1"/>
</dbReference>
<dbReference type="PANTHER" id="PTHR11761">
    <property type="entry name" value="50S/60S RIBOSOMAL PROTEIN L14/L23"/>
    <property type="match status" value="1"/>
</dbReference>
<dbReference type="PANTHER" id="PTHR11761:SF3">
    <property type="entry name" value="LARGE RIBOSOMAL SUBUNIT PROTEIN UL14M"/>
    <property type="match status" value="1"/>
</dbReference>
<dbReference type="Pfam" id="PF00238">
    <property type="entry name" value="Ribosomal_L14"/>
    <property type="match status" value="1"/>
</dbReference>
<dbReference type="SMART" id="SM01374">
    <property type="entry name" value="Ribosomal_L14"/>
    <property type="match status" value="1"/>
</dbReference>
<dbReference type="SUPFAM" id="SSF50193">
    <property type="entry name" value="Ribosomal protein L14"/>
    <property type="match status" value="1"/>
</dbReference>
<dbReference type="PROSITE" id="PS00049">
    <property type="entry name" value="RIBOSOMAL_L14"/>
    <property type="match status" value="1"/>
</dbReference>
<protein>
    <recommendedName>
        <fullName evidence="1">Large ribosomal subunit protein uL14</fullName>
    </recommendedName>
    <alternativeName>
        <fullName evidence="2">50S ribosomal protein L14</fullName>
    </alternativeName>
</protein>
<comment type="function">
    <text evidence="1">Binds to 23S rRNA. Forms part of two intersubunit bridges in the 70S ribosome.</text>
</comment>
<comment type="subunit">
    <text evidence="1">Part of the 50S ribosomal subunit. Forms a cluster with proteins L3 and L19. In the 70S ribosome, L14 and L19 interact and together make contacts with the 16S rRNA in bridges B5 and B8.</text>
</comment>
<comment type="similarity">
    <text evidence="1">Belongs to the universal ribosomal protein uL14 family.</text>
</comment>
<proteinExistence type="inferred from homology"/>
<reference key="1">
    <citation type="journal article" date="2004" name="J. Bacteriol.">
        <title>Complete genome sequence of Rickettsia typhi and comparison with sequences of other Rickettsiae.</title>
        <authorList>
            <person name="McLeod M.P."/>
            <person name="Qin X."/>
            <person name="Karpathy S.E."/>
            <person name="Gioia J."/>
            <person name="Highlander S.K."/>
            <person name="Fox G.E."/>
            <person name="McNeill T.Z."/>
            <person name="Jiang H."/>
            <person name="Muzny D."/>
            <person name="Jacob L.S."/>
            <person name="Hawes A.C."/>
            <person name="Sodergren E."/>
            <person name="Gill R."/>
            <person name="Hume J."/>
            <person name="Morgan M."/>
            <person name="Fan G."/>
            <person name="Amin A.G."/>
            <person name="Gibbs R.A."/>
            <person name="Hong C."/>
            <person name="Yu X.-J."/>
            <person name="Walker D.H."/>
            <person name="Weinstock G.M."/>
        </authorList>
    </citation>
    <scope>NUCLEOTIDE SEQUENCE [LARGE SCALE GENOMIC DNA]</scope>
    <source>
        <strain>ATCC VR-144 / Wilmington</strain>
    </source>
</reference>
<evidence type="ECO:0000255" key="1">
    <source>
        <dbReference type="HAMAP-Rule" id="MF_01367"/>
    </source>
</evidence>
<evidence type="ECO:0000305" key="2"/>
<gene>
    <name evidence="1" type="primary">rplN</name>
    <name type="ordered locus">RT0641</name>
</gene>
<organism>
    <name type="scientific">Rickettsia typhi (strain ATCC VR-144 / Wilmington)</name>
    <dbReference type="NCBI Taxonomy" id="257363"/>
    <lineage>
        <taxon>Bacteria</taxon>
        <taxon>Pseudomonadati</taxon>
        <taxon>Pseudomonadota</taxon>
        <taxon>Alphaproteobacteria</taxon>
        <taxon>Rickettsiales</taxon>
        <taxon>Rickettsiaceae</taxon>
        <taxon>Rickettsieae</taxon>
        <taxon>Rickettsia</taxon>
        <taxon>typhus group</taxon>
    </lineage>
</organism>
<accession>Q68W88</accession>
<feature type="chain" id="PRO_0000272389" description="Large ribosomal subunit protein uL14">
    <location>
        <begin position="1"/>
        <end position="122"/>
    </location>
</feature>
<name>RL14_RICTY</name>